<gene>
    <name evidence="1" type="primary">rpl37e</name>
    <name type="ordered locus">Mthe_0231</name>
</gene>
<organism>
    <name type="scientific">Methanothrix thermoacetophila (strain DSM 6194 / JCM 14653 / NBRC 101360 / PT)</name>
    <name type="common">Methanosaeta thermophila</name>
    <dbReference type="NCBI Taxonomy" id="349307"/>
    <lineage>
        <taxon>Archaea</taxon>
        <taxon>Methanobacteriati</taxon>
        <taxon>Methanobacteriota</taxon>
        <taxon>Stenosarchaea group</taxon>
        <taxon>Methanomicrobia</taxon>
        <taxon>Methanotrichales</taxon>
        <taxon>Methanotrichaceae</taxon>
        <taxon>Methanothrix</taxon>
    </lineage>
</organism>
<evidence type="ECO:0000255" key="1">
    <source>
        <dbReference type="HAMAP-Rule" id="MF_00547"/>
    </source>
</evidence>
<evidence type="ECO:0000305" key="2"/>
<dbReference type="EMBL" id="CP000477">
    <property type="protein sequence ID" value="ABK14029.1"/>
    <property type="molecule type" value="Genomic_DNA"/>
</dbReference>
<dbReference type="RefSeq" id="WP_011695428.1">
    <property type="nucleotide sequence ID" value="NC_008553.1"/>
</dbReference>
<dbReference type="SMR" id="A0B5Q5"/>
<dbReference type="STRING" id="349307.Mthe_0231"/>
<dbReference type="GeneID" id="4462004"/>
<dbReference type="KEGG" id="mtp:Mthe_0231"/>
<dbReference type="HOGENOM" id="CLU_208825_0_0_2"/>
<dbReference type="OrthoDB" id="5619at2157"/>
<dbReference type="Proteomes" id="UP000000674">
    <property type="component" value="Chromosome"/>
</dbReference>
<dbReference type="GO" id="GO:0022625">
    <property type="term" value="C:cytosolic large ribosomal subunit"/>
    <property type="evidence" value="ECO:0007669"/>
    <property type="project" value="TreeGrafter"/>
</dbReference>
<dbReference type="GO" id="GO:0019843">
    <property type="term" value="F:rRNA binding"/>
    <property type="evidence" value="ECO:0007669"/>
    <property type="project" value="UniProtKB-KW"/>
</dbReference>
<dbReference type="GO" id="GO:0003735">
    <property type="term" value="F:structural constituent of ribosome"/>
    <property type="evidence" value="ECO:0007669"/>
    <property type="project" value="InterPro"/>
</dbReference>
<dbReference type="GO" id="GO:0008270">
    <property type="term" value="F:zinc ion binding"/>
    <property type="evidence" value="ECO:0007669"/>
    <property type="project" value="UniProtKB-UniRule"/>
</dbReference>
<dbReference type="GO" id="GO:0006412">
    <property type="term" value="P:translation"/>
    <property type="evidence" value="ECO:0007669"/>
    <property type="project" value="UniProtKB-UniRule"/>
</dbReference>
<dbReference type="FunFam" id="2.20.25.30:FF:000003">
    <property type="entry name" value="50S ribosomal protein L37e"/>
    <property type="match status" value="1"/>
</dbReference>
<dbReference type="Gene3D" id="2.20.25.30">
    <property type="match status" value="1"/>
</dbReference>
<dbReference type="HAMAP" id="MF_00547">
    <property type="entry name" value="Ribosomal_eL37"/>
    <property type="match status" value="1"/>
</dbReference>
<dbReference type="InterPro" id="IPR001569">
    <property type="entry name" value="Ribosomal_eL37"/>
</dbReference>
<dbReference type="InterPro" id="IPR011331">
    <property type="entry name" value="Ribosomal_eL37/eL43"/>
</dbReference>
<dbReference type="InterPro" id="IPR011332">
    <property type="entry name" value="Ribosomal_zn-bd"/>
</dbReference>
<dbReference type="NCBIfam" id="NF003214">
    <property type="entry name" value="PRK04179.1"/>
    <property type="match status" value="1"/>
</dbReference>
<dbReference type="PANTHER" id="PTHR10768">
    <property type="entry name" value="60S RIBOSOMAL PROTEIN L37"/>
    <property type="match status" value="1"/>
</dbReference>
<dbReference type="PANTHER" id="PTHR10768:SF0">
    <property type="entry name" value="RIBOSOMAL PROTEIN L37"/>
    <property type="match status" value="1"/>
</dbReference>
<dbReference type="Pfam" id="PF01907">
    <property type="entry name" value="Ribosomal_L37e"/>
    <property type="match status" value="1"/>
</dbReference>
<dbReference type="SUPFAM" id="SSF57829">
    <property type="entry name" value="Zn-binding ribosomal proteins"/>
    <property type="match status" value="1"/>
</dbReference>
<feature type="chain" id="PRO_1000017768" description="Large ribosomal subunit protein eL37">
    <location>
        <begin position="1"/>
        <end position="56"/>
    </location>
</feature>
<feature type="zinc finger region" description="C4-type" evidence="1">
    <location>
        <begin position="19"/>
        <end position="37"/>
    </location>
</feature>
<feature type="binding site" evidence="1">
    <location>
        <position position="19"/>
    </location>
    <ligand>
        <name>Zn(2+)</name>
        <dbReference type="ChEBI" id="CHEBI:29105"/>
    </ligand>
</feature>
<feature type="binding site" evidence="1">
    <location>
        <position position="22"/>
    </location>
    <ligand>
        <name>Zn(2+)</name>
        <dbReference type="ChEBI" id="CHEBI:29105"/>
    </ligand>
</feature>
<feature type="binding site" evidence="1">
    <location>
        <position position="34"/>
    </location>
    <ligand>
        <name>Zn(2+)</name>
        <dbReference type="ChEBI" id="CHEBI:29105"/>
    </ligand>
</feature>
<feature type="binding site" evidence="1">
    <location>
        <position position="37"/>
    </location>
    <ligand>
        <name>Zn(2+)</name>
        <dbReference type="ChEBI" id="CHEBI:29105"/>
    </ligand>
</feature>
<protein>
    <recommendedName>
        <fullName evidence="1">Large ribosomal subunit protein eL37</fullName>
    </recommendedName>
    <alternativeName>
        <fullName evidence="2">50S ribosomal protein L37e</fullName>
    </alternativeName>
</protein>
<reference key="1">
    <citation type="submission" date="2006-10" db="EMBL/GenBank/DDBJ databases">
        <title>Complete sequence of Methanosaeta thermophila PT.</title>
        <authorList>
            <consortium name="US DOE Joint Genome Institute"/>
            <person name="Copeland A."/>
            <person name="Lucas S."/>
            <person name="Lapidus A."/>
            <person name="Barry K."/>
            <person name="Detter J.C."/>
            <person name="Glavina del Rio T."/>
            <person name="Hammon N."/>
            <person name="Israni S."/>
            <person name="Pitluck S."/>
            <person name="Chain P."/>
            <person name="Malfatti S."/>
            <person name="Shin M."/>
            <person name="Vergez L."/>
            <person name="Schmutz J."/>
            <person name="Larimer F."/>
            <person name="Land M."/>
            <person name="Hauser L."/>
            <person name="Kyrpides N."/>
            <person name="Kim E."/>
            <person name="Smith K.S."/>
            <person name="Ingram-Smith C."/>
            <person name="Richardson P."/>
        </authorList>
    </citation>
    <scope>NUCLEOTIDE SEQUENCE [LARGE SCALE GENOMIC DNA]</scope>
    <source>
        <strain>DSM 6194 / JCM 14653 / NBRC 101360 / PT</strain>
    </source>
</reference>
<sequence>MSKGTPSMGKCHKRTHVRCRRCGRLSYNFNRKTCVACGFGRSKRLRSYKWMRKAGY</sequence>
<keyword id="KW-0479">Metal-binding</keyword>
<keyword id="KW-1185">Reference proteome</keyword>
<keyword id="KW-0687">Ribonucleoprotein</keyword>
<keyword id="KW-0689">Ribosomal protein</keyword>
<keyword id="KW-0694">RNA-binding</keyword>
<keyword id="KW-0699">rRNA-binding</keyword>
<keyword id="KW-0862">Zinc</keyword>
<keyword id="KW-0863">Zinc-finger</keyword>
<proteinExistence type="inferred from homology"/>
<name>RL37_METTP</name>
<comment type="function">
    <text evidence="1">Binds to the 23S rRNA.</text>
</comment>
<comment type="cofactor">
    <cofactor evidence="1">
        <name>Zn(2+)</name>
        <dbReference type="ChEBI" id="CHEBI:29105"/>
    </cofactor>
    <text evidence="1">Binds 1 zinc ion per subunit.</text>
</comment>
<comment type="similarity">
    <text evidence="1">Belongs to the eukaryotic ribosomal protein eL37 family.</text>
</comment>
<accession>A0B5Q5</accession>